<comment type="function">
    <text evidence="1">Probable amino-acid or metabolite transport protein.</text>
</comment>
<comment type="subcellular location">
    <subcellularLocation>
        <location evidence="3">Cell membrane</location>
        <topology evidence="3">Multi-pass membrane protein</topology>
    </subcellularLocation>
</comment>
<comment type="similarity">
    <text evidence="3">Belongs to the amino acid-polyamine-organocation (APC) superfamily.</text>
</comment>
<accession>P9WQM2</accession>
<accession>L0T9W4</accession>
<accession>P63349</accession>
<accession>Q10858</accession>
<feature type="chain" id="PRO_0000426751" description="Uncharacterized transporter MT2055">
    <location>
        <begin position="1"/>
        <end position="440"/>
    </location>
</feature>
<feature type="transmembrane region" description="Helical" evidence="2">
    <location>
        <begin position="24"/>
        <end position="44"/>
    </location>
</feature>
<feature type="transmembrane region" description="Helical" evidence="2">
    <location>
        <begin position="47"/>
        <end position="67"/>
    </location>
</feature>
<feature type="transmembrane region" description="Helical" evidence="2">
    <location>
        <begin position="93"/>
        <end position="113"/>
    </location>
</feature>
<feature type="transmembrane region" description="Helical" evidence="2">
    <location>
        <begin position="117"/>
        <end position="137"/>
    </location>
</feature>
<feature type="transmembrane region" description="Helical" evidence="2">
    <location>
        <begin position="155"/>
        <end position="175"/>
    </location>
</feature>
<feature type="transmembrane region" description="Helical" evidence="2">
    <location>
        <begin position="183"/>
        <end position="203"/>
    </location>
</feature>
<feature type="transmembrane region" description="Helical" evidence="2">
    <location>
        <begin position="229"/>
        <end position="249"/>
    </location>
</feature>
<feature type="transmembrane region" description="Helical" evidence="2">
    <location>
        <begin position="276"/>
        <end position="296"/>
    </location>
</feature>
<feature type="transmembrane region" description="Helical" evidence="2">
    <location>
        <begin position="323"/>
        <end position="343"/>
    </location>
</feature>
<feature type="transmembrane region" description="Helical" evidence="2">
    <location>
        <begin position="346"/>
        <end position="366"/>
    </location>
</feature>
<feature type="transmembrane region" description="Helical" evidence="2">
    <location>
        <begin position="379"/>
        <end position="399"/>
    </location>
</feature>
<feature type="transmembrane region" description="Helical" evidence="2">
    <location>
        <begin position="400"/>
        <end position="420"/>
    </location>
</feature>
<reference key="1">
    <citation type="journal article" date="2002" name="J. Bacteriol.">
        <title>Whole-genome comparison of Mycobacterium tuberculosis clinical and laboratory strains.</title>
        <authorList>
            <person name="Fleischmann R.D."/>
            <person name="Alland D."/>
            <person name="Eisen J.A."/>
            <person name="Carpenter L."/>
            <person name="White O."/>
            <person name="Peterson J.D."/>
            <person name="DeBoy R.T."/>
            <person name="Dodson R.J."/>
            <person name="Gwinn M.L."/>
            <person name="Haft D.H."/>
            <person name="Hickey E.K."/>
            <person name="Kolonay J.F."/>
            <person name="Nelson W.C."/>
            <person name="Umayam L.A."/>
            <person name="Ermolaeva M.D."/>
            <person name="Salzberg S.L."/>
            <person name="Delcher A."/>
            <person name="Utterback T.R."/>
            <person name="Weidman J.F."/>
            <person name="Khouri H.M."/>
            <person name="Gill J."/>
            <person name="Mikula A."/>
            <person name="Bishai W."/>
            <person name="Jacobs W.R. Jr."/>
            <person name="Venter J.C."/>
            <person name="Fraser C.M."/>
        </authorList>
    </citation>
    <scope>NUCLEOTIDE SEQUENCE [LARGE SCALE GENOMIC DNA]</scope>
    <source>
        <strain>CDC 1551 / Oshkosh</strain>
    </source>
</reference>
<dbReference type="EMBL" id="AE000516">
    <property type="protein sequence ID" value="AAK46332.1"/>
    <property type="molecule type" value="Genomic_DNA"/>
</dbReference>
<dbReference type="PIR" id="E70758">
    <property type="entry name" value="E70758"/>
</dbReference>
<dbReference type="RefSeq" id="WP_003410039.1">
    <property type="nucleotide sequence ID" value="NZ_KK341227.1"/>
</dbReference>
<dbReference type="SMR" id="P9WQM2"/>
<dbReference type="KEGG" id="mtc:MT2055"/>
<dbReference type="PATRIC" id="fig|83331.31.peg.2212"/>
<dbReference type="HOGENOM" id="CLU_007946_15_12_11"/>
<dbReference type="Proteomes" id="UP000001020">
    <property type="component" value="Chromosome"/>
</dbReference>
<dbReference type="GO" id="GO:0005886">
    <property type="term" value="C:plasma membrane"/>
    <property type="evidence" value="ECO:0007669"/>
    <property type="project" value="UniProtKB-SubCell"/>
</dbReference>
<dbReference type="GO" id="GO:0022857">
    <property type="term" value="F:transmembrane transporter activity"/>
    <property type="evidence" value="ECO:0007669"/>
    <property type="project" value="InterPro"/>
</dbReference>
<dbReference type="Gene3D" id="1.20.1740.10">
    <property type="entry name" value="Amino acid/polyamine transporter I"/>
    <property type="match status" value="1"/>
</dbReference>
<dbReference type="InterPro" id="IPR002293">
    <property type="entry name" value="AA/rel_permease1"/>
</dbReference>
<dbReference type="InterPro" id="IPR050367">
    <property type="entry name" value="APC_superfamily"/>
</dbReference>
<dbReference type="PANTHER" id="PTHR42770">
    <property type="entry name" value="AMINO ACID TRANSPORTER-RELATED"/>
    <property type="match status" value="1"/>
</dbReference>
<dbReference type="PANTHER" id="PTHR42770:SF7">
    <property type="entry name" value="MEMBRANE PROTEIN"/>
    <property type="match status" value="1"/>
</dbReference>
<dbReference type="Pfam" id="PF13520">
    <property type="entry name" value="AA_permease_2"/>
    <property type="match status" value="1"/>
</dbReference>
<dbReference type="PIRSF" id="PIRSF006060">
    <property type="entry name" value="AA_transporter"/>
    <property type="match status" value="1"/>
</dbReference>
<keyword id="KW-1003">Cell membrane</keyword>
<keyword id="KW-0472">Membrane</keyword>
<keyword id="KW-1185">Reference proteome</keyword>
<keyword id="KW-0812">Transmembrane</keyword>
<keyword id="KW-1133">Transmembrane helix</keyword>
<keyword id="KW-0813">Transport</keyword>
<evidence type="ECO:0000250" key="1"/>
<evidence type="ECO:0000255" key="2"/>
<evidence type="ECO:0000305" key="3"/>
<protein>
    <recommendedName>
        <fullName>Uncharacterized transporter MT2055</fullName>
    </recommendedName>
</protein>
<sequence length="440" mass="45267">MRRPLDPRDIPDELRRRLGLLDAVVIGLGSMIGAGIFAALAPAAYAAGSGLLLGLAVAAVVAYCNAISSARLAARYPASGGTYVYGRMRLGDFWGYLAGWGFVVGKTASCAAMALTVGFYVWPAQAHAVAVAVVVALTAVNYAGIQKSAWLTRSIVAVVLVVLTAVVVAAYGSGAADPARLDIGVDAHVWGMLQAAGLLFFAFAGYARIATLGEEVRDPARTIPRAIPLALGITLAVYALVAVAVIAVLGPQRLARAAAPLSEAMRVAGVNWLIPVVQIGAAVAALGSLLALILGVSRTTLAMARDRHLPRWLAAVHPRFKVPFRAELVVGAVVAALAATADIRGAIGFSSFGVLVYYAIANASALTLGLDEGRPRRLIPLVGLIGCVVLAFALPLSSVAAGAAVLGVGVAAYGVRRIITRRARQTDSGDTQRSGHPSAT</sequence>
<proteinExistence type="inferred from homology"/>
<gene>
    <name type="ordered locus">MT2055</name>
</gene>
<name>Y1999_MYCTO</name>
<organism>
    <name type="scientific">Mycobacterium tuberculosis (strain CDC 1551 / Oshkosh)</name>
    <dbReference type="NCBI Taxonomy" id="83331"/>
    <lineage>
        <taxon>Bacteria</taxon>
        <taxon>Bacillati</taxon>
        <taxon>Actinomycetota</taxon>
        <taxon>Actinomycetes</taxon>
        <taxon>Mycobacteriales</taxon>
        <taxon>Mycobacteriaceae</taxon>
        <taxon>Mycobacterium</taxon>
        <taxon>Mycobacterium tuberculosis complex</taxon>
    </lineage>
</organism>